<proteinExistence type="inferred from homology"/>
<dbReference type="EMBL" id="AL591688">
    <property type="protein sequence ID" value="CAC47880.1"/>
    <property type="molecule type" value="Genomic_DNA"/>
</dbReference>
<dbReference type="RefSeq" id="NP_387407.1">
    <property type="nucleotide sequence ID" value="NC_003047.1"/>
</dbReference>
<dbReference type="SMR" id="Q92KZ7"/>
<dbReference type="EnsemblBacteria" id="CAC47880">
    <property type="protein sequence ID" value="CAC47880"/>
    <property type="gene ID" value="SMc04396"/>
</dbReference>
<dbReference type="KEGG" id="sme:SMc04396"/>
<dbReference type="PATRIC" id="fig|266834.11.peg.4861"/>
<dbReference type="eggNOG" id="COG1653">
    <property type="taxonomic scope" value="Bacteria"/>
</dbReference>
<dbReference type="HOGENOM" id="CLU_031285_15_0_5"/>
<dbReference type="OrthoDB" id="9798191at2"/>
<dbReference type="Proteomes" id="UP000001976">
    <property type="component" value="Chromosome"/>
</dbReference>
<dbReference type="GO" id="GO:0042597">
    <property type="term" value="C:periplasmic space"/>
    <property type="evidence" value="ECO:0007669"/>
    <property type="project" value="UniProtKB-SubCell"/>
</dbReference>
<dbReference type="Gene3D" id="3.40.190.10">
    <property type="entry name" value="Periplasmic binding protein-like II"/>
    <property type="match status" value="2"/>
</dbReference>
<dbReference type="InterPro" id="IPR050490">
    <property type="entry name" value="Bact_solute-bd_prot1"/>
</dbReference>
<dbReference type="InterPro" id="IPR006059">
    <property type="entry name" value="SBP"/>
</dbReference>
<dbReference type="PANTHER" id="PTHR43649">
    <property type="entry name" value="ARABINOSE-BINDING PROTEIN-RELATED"/>
    <property type="match status" value="1"/>
</dbReference>
<dbReference type="PANTHER" id="PTHR43649:SF28">
    <property type="entry name" value="BINDING PROTEIN COMPONENT OF ABC SUGAR TRANSPORTER-RELATED"/>
    <property type="match status" value="1"/>
</dbReference>
<dbReference type="Pfam" id="PF01547">
    <property type="entry name" value="SBP_bac_1"/>
    <property type="match status" value="1"/>
</dbReference>
<dbReference type="SUPFAM" id="SSF53850">
    <property type="entry name" value="Periplasmic binding protein-like II"/>
    <property type="match status" value="1"/>
</dbReference>
<reference key="1">
    <citation type="journal article" date="2001" name="Proc. Natl. Acad. Sci. U.S.A.">
        <title>Analysis of the chromosome sequence of the legume symbiont Sinorhizobium meliloti strain 1021.</title>
        <authorList>
            <person name="Capela D."/>
            <person name="Barloy-Hubler F."/>
            <person name="Gouzy J."/>
            <person name="Bothe G."/>
            <person name="Ampe F."/>
            <person name="Batut J."/>
            <person name="Boistard P."/>
            <person name="Becker A."/>
            <person name="Boutry M."/>
            <person name="Cadieu E."/>
            <person name="Dreano S."/>
            <person name="Gloux S."/>
            <person name="Godrie T."/>
            <person name="Goffeau A."/>
            <person name="Kahn D."/>
            <person name="Kiss E."/>
            <person name="Lelaure V."/>
            <person name="Masuy D."/>
            <person name="Pohl T."/>
            <person name="Portetelle D."/>
            <person name="Puehler A."/>
            <person name="Purnelle B."/>
            <person name="Ramsperger U."/>
            <person name="Renard C."/>
            <person name="Thebault P."/>
            <person name="Vandenbol M."/>
            <person name="Weidner S."/>
            <person name="Galibert F."/>
        </authorList>
    </citation>
    <scope>NUCLEOTIDE SEQUENCE [LARGE SCALE GENOMIC DNA]</scope>
    <source>
        <strain>1021</strain>
    </source>
</reference>
<reference key="2">
    <citation type="journal article" date="2001" name="Science">
        <title>The composite genome of the legume symbiont Sinorhizobium meliloti.</title>
        <authorList>
            <person name="Galibert F."/>
            <person name="Finan T.M."/>
            <person name="Long S.R."/>
            <person name="Puehler A."/>
            <person name="Abola P."/>
            <person name="Ampe F."/>
            <person name="Barloy-Hubler F."/>
            <person name="Barnett M.J."/>
            <person name="Becker A."/>
            <person name="Boistard P."/>
            <person name="Bothe G."/>
            <person name="Boutry M."/>
            <person name="Bowser L."/>
            <person name="Buhrmester J."/>
            <person name="Cadieu E."/>
            <person name="Capela D."/>
            <person name="Chain P."/>
            <person name="Cowie A."/>
            <person name="Davis R.W."/>
            <person name="Dreano S."/>
            <person name="Federspiel N.A."/>
            <person name="Fisher R.F."/>
            <person name="Gloux S."/>
            <person name="Godrie T."/>
            <person name="Goffeau A."/>
            <person name="Golding B."/>
            <person name="Gouzy J."/>
            <person name="Gurjal M."/>
            <person name="Hernandez-Lucas I."/>
            <person name="Hong A."/>
            <person name="Huizar L."/>
            <person name="Hyman R.W."/>
            <person name="Jones T."/>
            <person name="Kahn D."/>
            <person name="Kahn M.L."/>
            <person name="Kalman S."/>
            <person name="Keating D.H."/>
            <person name="Kiss E."/>
            <person name="Komp C."/>
            <person name="Lelaure V."/>
            <person name="Masuy D."/>
            <person name="Palm C."/>
            <person name="Peck M.C."/>
            <person name="Pohl T.M."/>
            <person name="Portetelle D."/>
            <person name="Purnelle B."/>
            <person name="Ramsperger U."/>
            <person name="Surzycki R."/>
            <person name="Thebault P."/>
            <person name="Vandenbol M."/>
            <person name="Vorhoelter F.J."/>
            <person name="Weidner S."/>
            <person name="Wells D.H."/>
            <person name="Wong K."/>
            <person name="Yeh K.-C."/>
            <person name="Batut J."/>
        </authorList>
    </citation>
    <scope>NUCLEOTIDE SEQUENCE [LARGE SCALE GENOMIC DNA]</scope>
    <source>
        <strain>1021</strain>
    </source>
</reference>
<evidence type="ECO:0000255" key="1"/>
<evidence type="ECO:0000305" key="2"/>
<organism>
    <name type="scientific">Rhizobium meliloti (strain 1021)</name>
    <name type="common">Ensifer meliloti</name>
    <name type="synonym">Sinorhizobium meliloti</name>
    <dbReference type="NCBI Taxonomy" id="266834"/>
    <lineage>
        <taxon>Bacteria</taxon>
        <taxon>Pseudomonadati</taxon>
        <taxon>Pseudomonadota</taxon>
        <taxon>Alphaproteobacteria</taxon>
        <taxon>Hyphomicrobiales</taxon>
        <taxon>Rhizobiaceae</taxon>
        <taxon>Sinorhizobium/Ensifer group</taxon>
        <taxon>Sinorhizobium</taxon>
    </lineage>
</organism>
<comment type="function">
    <text evidence="2">Part of a binding-protein-dependent transport system for a sugar.</text>
</comment>
<comment type="subcellular location">
    <subcellularLocation>
        <location evidence="2">Periplasm</location>
    </subcellularLocation>
</comment>
<comment type="similarity">
    <text evidence="2">Belongs to the bacterial solute-binding protein 1 family.</text>
</comment>
<feature type="signal peptide" evidence="1">
    <location>
        <begin position="1"/>
        <end position="22"/>
    </location>
</feature>
<feature type="chain" id="PRO_0000031712" description="Probable sugar-binding periplasmic protein">
    <location>
        <begin position="23"/>
        <end position="414"/>
    </location>
</feature>
<sequence>MRKFMTTTAVAALMLAATAARAAENVEVLHWWTSGGEAAALDVLKKDLESKGISWTDMPVAGGGGTEAMTVLRARVTAGNAPTAVQMLGFDILDWAKEGALGNLDEVAAKEGWDKVVPAALQQFSKYDGHWIAAPVNVHSTNWVWINKAALDKAGAKEPTTWEELIALLDKFKEQGITPIAHGGQPWQDATIFDAVVLSLGNDFYKQAFIDLDPAALGGDKMKEAFDRMTKLRSYVDDNFSGRDWNLASAMVIENKAGLQFMGDWAKGEFLKAKKVPGTDFVCMRFPGTQGSVTFNSDQFAMFKVSEDKVPAQLQMASAIESPAFQSAFNVVKGSVPARTDVPDTDFDACGKKGIKDLAEANTNGTLFGSMAHGHANPAAVKNAIYDVVTRQFNGELNSEEAVTELVAAVEAAK</sequence>
<keyword id="KW-0574">Periplasm</keyword>
<keyword id="KW-1185">Reference proteome</keyword>
<keyword id="KW-0732">Signal</keyword>
<keyword id="KW-0762">Sugar transport</keyword>
<keyword id="KW-0813">Transport</keyword>
<protein>
    <recommendedName>
        <fullName>Probable sugar-binding periplasmic protein</fullName>
    </recommendedName>
</protein>
<accession>Q92KZ7</accession>
<gene>
    <name type="ordered locus">R03301</name>
    <name type="ORF">SMc04396</name>
</gene>
<name>SP39_RHIME</name>